<gene>
    <name evidence="1" type="primary">nuoK</name>
    <name type="ordered locus">BCG_3178</name>
</gene>
<dbReference type="EC" id="7.1.1.-" evidence="1"/>
<dbReference type="EMBL" id="AM408590">
    <property type="protein sequence ID" value="CAL73167.1"/>
    <property type="molecule type" value="Genomic_DNA"/>
</dbReference>
<dbReference type="RefSeq" id="WP_003416452.1">
    <property type="nucleotide sequence ID" value="NC_008769.1"/>
</dbReference>
<dbReference type="SMR" id="A1KNF1"/>
<dbReference type="GeneID" id="45427142"/>
<dbReference type="KEGG" id="mbb:BCG_3178"/>
<dbReference type="HOGENOM" id="CLU_144724_0_0_11"/>
<dbReference type="Proteomes" id="UP000001472">
    <property type="component" value="Chromosome"/>
</dbReference>
<dbReference type="GO" id="GO:0030964">
    <property type="term" value="C:NADH dehydrogenase complex"/>
    <property type="evidence" value="ECO:0007669"/>
    <property type="project" value="TreeGrafter"/>
</dbReference>
<dbReference type="GO" id="GO:0005886">
    <property type="term" value="C:plasma membrane"/>
    <property type="evidence" value="ECO:0007669"/>
    <property type="project" value="UniProtKB-SubCell"/>
</dbReference>
<dbReference type="GO" id="GO:0050136">
    <property type="term" value="F:NADH:ubiquinone reductase (non-electrogenic) activity"/>
    <property type="evidence" value="ECO:0007669"/>
    <property type="project" value="UniProtKB-UniRule"/>
</dbReference>
<dbReference type="GO" id="GO:0048038">
    <property type="term" value="F:quinone binding"/>
    <property type="evidence" value="ECO:0007669"/>
    <property type="project" value="UniProtKB-KW"/>
</dbReference>
<dbReference type="GO" id="GO:0042773">
    <property type="term" value="P:ATP synthesis coupled electron transport"/>
    <property type="evidence" value="ECO:0007669"/>
    <property type="project" value="InterPro"/>
</dbReference>
<dbReference type="FunFam" id="1.10.287.3510:FF:000001">
    <property type="entry name" value="NADH-quinone oxidoreductase subunit K"/>
    <property type="match status" value="1"/>
</dbReference>
<dbReference type="Gene3D" id="1.10.287.3510">
    <property type="match status" value="1"/>
</dbReference>
<dbReference type="HAMAP" id="MF_01456">
    <property type="entry name" value="NDH1_NuoK"/>
    <property type="match status" value="1"/>
</dbReference>
<dbReference type="InterPro" id="IPR001133">
    <property type="entry name" value="NADH_UbQ_OxRdtase_chain4L/K"/>
</dbReference>
<dbReference type="InterPro" id="IPR039428">
    <property type="entry name" value="NUOK/Mnh_C1-like"/>
</dbReference>
<dbReference type="NCBIfam" id="NF004320">
    <property type="entry name" value="PRK05715.1-2"/>
    <property type="match status" value="1"/>
</dbReference>
<dbReference type="PANTHER" id="PTHR11434:SF21">
    <property type="entry name" value="NADH DEHYDROGENASE SUBUNIT 4L-RELATED"/>
    <property type="match status" value="1"/>
</dbReference>
<dbReference type="PANTHER" id="PTHR11434">
    <property type="entry name" value="NADH-UBIQUINONE OXIDOREDUCTASE SUBUNIT ND4L"/>
    <property type="match status" value="1"/>
</dbReference>
<dbReference type="Pfam" id="PF00420">
    <property type="entry name" value="Oxidored_q2"/>
    <property type="match status" value="1"/>
</dbReference>
<accession>A1KNF1</accession>
<sequence length="99" mass="10858">MNPANYLYLSVLLFTIGASGVLLRRNAIVMFMCVELMLNAVNLAFVTFARMHGHLDAQMIAFFTMVVAACEVVVGLAIIMTIFRTRKSASVDDANLLKG</sequence>
<reference key="1">
    <citation type="journal article" date="2007" name="Proc. Natl. Acad. Sci. U.S.A.">
        <title>Genome plasticity of BCG and impact on vaccine efficacy.</title>
        <authorList>
            <person name="Brosch R."/>
            <person name="Gordon S.V."/>
            <person name="Garnier T."/>
            <person name="Eiglmeier K."/>
            <person name="Frigui W."/>
            <person name="Valenti P."/>
            <person name="Dos Santos S."/>
            <person name="Duthoy S."/>
            <person name="Lacroix C."/>
            <person name="Garcia-Pelayo C."/>
            <person name="Inwald J.K."/>
            <person name="Golby P."/>
            <person name="Garcia J.N."/>
            <person name="Hewinson R.G."/>
            <person name="Behr M.A."/>
            <person name="Quail M.A."/>
            <person name="Churcher C."/>
            <person name="Barrell B.G."/>
            <person name="Parkhill J."/>
            <person name="Cole S.T."/>
        </authorList>
    </citation>
    <scope>NUCLEOTIDE SEQUENCE [LARGE SCALE GENOMIC DNA]</scope>
    <source>
        <strain>BCG / Pasteur 1173P2</strain>
    </source>
</reference>
<evidence type="ECO:0000255" key="1">
    <source>
        <dbReference type="HAMAP-Rule" id="MF_01456"/>
    </source>
</evidence>
<proteinExistence type="inferred from homology"/>
<protein>
    <recommendedName>
        <fullName evidence="1">NADH-quinone oxidoreductase subunit K</fullName>
        <ecNumber evidence="1">7.1.1.-</ecNumber>
    </recommendedName>
    <alternativeName>
        <fullName evidence="1">NADH dehydrogenase I subunit K</fullName>
    </alternativeName>
    <alternativeName>
        <fullName evidence="1">NDH-1 subunit K</fullName>
    </alternativeName>
</protein>
<name>NUOK_MYCBP</name>
<feature type="chain" id="PRO_0000390126" description="NADH-quinone oxidoreductase subunit K">
    <location>
        <begin position="1"/>
        <end position="99"/>
    </location>
</feature>
<feature type="transmembrane region" description="Helical" evidence="1">
    <location>
        <begin position="3"/>
        <end position="23"/>
    </location>
</feature>
<feature type="transmembrane region" description="Helical" evidence="1">
    <location>
        <begin position="28"/>
        <end position="48"/>
    </location>
</feature>
<feature type="transmembrane region" description="Helical" evidence="1">
    <location>
        <begin position="59"/>
        <end position="79"/>
    </location>
</feature>
<comment type="function">
    <text evidence="1">NDH-1 shuttles electrons from NADH, via FMN and iron-sulfur (Fe-S) centers, to quinones in the respiratory chain. The immediate electron acceptor for the enzyme in this species is believed to be a menaquinone. Couples the redox reaction to proton translocation (for every two electrons transferred, four hydrogen ions are translocated across the cytoplasmic membrane), and thus conserves the redox energy in a proton gradient.</text>
</comment>
<comment type="catalytic activity">
    <reaction evidence="1">
        <text>a quinone + NADH + 5 H(+)(in) = a quinol + NAD(+) + 4 H(+)(out)</text>
        <dbReference type="Rhea" id="RHEA:57888"/>
        <dbReference type="ChEBI" id="CHEBI:15378"/>
        <dbReference type="ChEBI" id="CHEBI:24646"/>
        <dbReference type="ChEBI" id="CHEBI:57540"/>
        <dbReference type="ChEBI" id="CHEBI:57945"/>
        <dbReference type="ChEBI" id="CHEBI:132124"/>
    </reaction>
</comment>
<comment type="subunit">
    <text evidence="1">NDH-1 is composed of 14 different subunits. Subunits NuoA, H, J, K, L, M, N constitute the membrane sector of the complex.</text>
</comment>
<comment type="subcellular location">
    <subcellularLocation>
        <location evidence="1">Cell membrane</location>
        <topology evidence="1">Multi-pass membrane protein</topology>
    </subcellularLocation>
</comment>
<comment type="similarity">
    <text evidence="1">Belongs to the complex I subunit 4L family.</text>
</comment>
<keyword id="KW-1003">Cell membrane</keyword>
<keyword id="KW-0472">Membrane</keyword>
<keyword id="KW-0520">NAD</keyword>
<keyword id="KW-0874">Quinone</keyword>
<keyword id="KW-1278">Translocase</keyword>
<keyword id="KW-0812">Transmembrane</keyword>
<keyword id="KW-1133">Transmembrane helix</keyword>
<keyword id="KW-0813">Transport</keyword>
<organism>
    <name type="scientific">Mycobacterium bovis (strain BCG / Pasteur 1173P2)</name>
    <dbReference type="NCBI Taxonomy" id="410289"/>
    <lineage>
        <taxon>Bacteria</taxon>
        <taxon>Bacillati</taxon>
        <taxon>Actinomycetota</taxon>
        <taxon>Actinomycetes</taxon>
        <taxon>Mycobacteriales</taxon>
        <taxon>Mycobacteriaceae</taxon>
        <taxon>Mycobacterium</taxon>
        <taxon>Mycobacterium tuberculosis complex</taxon>
    </lineage>
</organism>